<evidence type="ECO:0000255" key="1">
    <source>
        <dbReference type="HAMAP-Rule" id="MF_00489"/>
    </source>
</evidence>
<proteinExistence type="inferred from homology"/>
<organism>
    <name type="scientific">Vibrio cholerae serotype O1 (strain ATCC 39541 / Classical Ogawa 395 / O395)</name>
    <dbReference type="NCBI Taxonomy" id="345073"/>
    <lineage>
        <taxon>Bacteria</taxon>
        <taxon>Pseudomonadati</taxon>
        <taxon>Pseudomonadota</taxon>
        <taxon>Gammaproteobacteria</taxon>
        <taxon>Vibrionales</taxon>
        <taxon>Vibrionaceae</taxon>
        <taxon>Vibrio</taxon>
    </lineage>
</organism>
<feature type="chain" id="PRO_1000072425" description="UPF0178 protein VC0395_A0405/VC395_0897">
    <location>
        <begin position="1"/>
        <end position="149"/>
    </location>
</feature>
<sequence length="149" mass="16454">MKIWVDADACPKVIRETLIRAAERTGVECTFVANHLIPLPKRDNIRALQVSSGFDIADNEIVRRTEAGDLVITADIPLADEVISKGGLALNPRGELYTKETIKARLNIRDFMDTMRASGIQTGGPAALSQTERREFANHLDRILAKRTG</sequence>
<dbReference type="EMBL" id="CP000627">
    <property type="protein sequence ID" value="ABQ19978.1"/>
    <property type="molecule type" value="Genomic_DNA"/>
</dbReference>
<dbReference type="EMBL" id="CP001235">
    <property type="protein sequence ID" value="ACP08911.1"/>
    <property type="molecule type" value="Genomic_DNA"/>
</dbReference>
<dbReference type="RefSeq" id="WP_000708225.1">
    <property type="nucleotide sequence ID" value="NZ_JAACZH010000033.1"/>
</dbReference>
<dbReference type="KEGG" id="vco:VC0395_A0405"/>
<dbReference type="KEGG" id="vcr:VC395_0897"/>
<dbReference type="PATRIC" id="fig|345073.21.peg.868"/>
<dbReference type="eggNOG" id="COG1671">
    <property type="taxonomic scope" value="Bacteria"/>
</dbReference>
<dbReference type="HOGENOM" id="CLU_106619_2_1_6"/>
<dbReference type="OrthoDB" id="9798918at2"/>
<dbReference type="Proteomes" id="UP000000249">
    <property type="component" value="Chromosome 2"/>
</dbReference>
<dbReference type="CDD" id="cd18720">
    <property type="entry name" value="PIN_YqxD-like"/>
    <property type="match status" value="1"/>
</dbReference>
<dbReference type="HAMAP" id="MF_00489">
    <property type="entry name" value="UPF0178"/>
    <property type="match status" value="1"/>
</dbReference>
<dbReference type="InterPro" id="IPR003791">
    <property type="entry name" value="UPF0178"/>
</dbReference>
<dbReference type="NCBIfam" id="NF001095">
    <property type="entry name" value="PRK00124.1"/>
    <property type="match status" value="1"/>
</dbReference>
<dbReference type="PANTHER" id="PTHR35146">
    <property type="entry name" value="UPF0178 PROTEIN YAII"/>
    <property type="match status" value="1"/>
</dbReference>
<dbReference type="PANTHER" id="PTHR35146:SF1">
    <property type="entry name" value="UPF0178 PROTEIN YAII"/>
    <property type="match status" value="1"/>
</dbReference>
<dbReference type="Pfam" id="PF02639">
    <property type="entry name" value="DUF188"/>
    <property type="match status" value="1"/>
</dbReference>
<name>Y1605_VIBC3</name>
<comment type="similarity">
    <text evidence="1">Belongs to the UPF0178 family.</text>
</comment>
<gene>
    <name type="ordered locus">VC0395_A0405</name>
    <name type="ordered locus">VC395_0897</name>
</gene>
<protein>
    <recommendedName>
        <fullName evidence="1">UPF0178 protein VC0395_A0405/VC395_0897</fullName>
    </recommendedName>
</protein>
<reference key="1">
    <citation type="submission" date="2007-03" db="EMBL/GenBank/DDBJ databases">
        <authorList>
            <person name="Heidelberg J."/>
        </authorList>
    </citation>
    <scope>NUCLEOTIDE SEQUENCE [LARGE SCALE GENOMIC DNA]</scope>
    <source>
        <strain>ATCC 39541 / Classical Ogawa 395 / O395</strain>
    </source>
</reference>
<reference key="2">
    <citation type="journal article" date="2008" name="PLoS ONE">
        <title>A recalibrated molecular clock and independent origins for the cholera pandemic clones.</title>
        <authorList>
            <person name="Feng L."/>
            <person name="Reeves P.R."/>
            <person name="Lan R."/>
            <person name="Ren Y."/>
            <person name="Gao C."/>
            <person name="Zhou Z."/>
            <person name="Ren Y."/>
            <person name="Cheng J."/>
            <person name="Wang W."/>
            <person name="Wang J."/>
            <person name="Qian W."/>
            <person name="Li D."/>
            <person name="Wang L."/>
        </authorList>
    </citation>
    <scope>NUCLEOTIDE SEQUENCE [LARGE SCALE GENOMIC DNA]</scope>
    <source>
        <strain>ATCC 39541 / Classical Ogawa 395 / O395</strain>
    </source>
</reference>
<accession>A5F345</accession>
<accession>C3LYP5</accession>